<reference key="1">
    <citation type="journal article" date="2010" name="BMC Genomics">
        <title>A genomic perspective on the potential of Actinobacillus succinogenes for industrial succinate production.</title>
        <authorList>
            <person name="McKinlay J.B."/>
            <person name="Laivenieks M."/>
            <person name="Schindler B.D."/>
            <person name="McKinlay A.A."/>
            <person name="Siddaramappa S."/>
            <person name="Challacombe J.F."/>
            <person name="Lowry S.R."/>
            <person name="Clum A."/>
            <person name="Lapidus A.L."/>
            <person name="Burkhart K.B."/>
            <person name="Harkins V."/>
            <person name="Vieille C."/>
        </authorList>
    </citation>
    <scope>NUCLEOTIDE SEQUENCE [LARGE SCALE GENOMIC DNA]</scope>
    <source>
        <strain>ATCC 55618 / DSM 22257 / CCUG 43843 / 130Z</strain>
    </source>
</reference>
<keyword id="KW-0240">DNA-directed RNA polymerase</keyword>
<keyword id="KW-0548">Nucleotidyltransferase</keyword>
<keyword id="KW-1185">Reference proteome</keyword>
<keyword id="KW-0804">Transcription</keyword>
<keyword id="KW-0808">Transferase</keyword>
<gene>
    <name evidence="1" type="primary">rpoA</name>
    <name type="ordered locus">Asuc_0484</name>
</gene>
<protein>
    <recommendedName>
        <fullName evidence="1">DNA-directed RNA polymerase subunit alpha</fullName>
        <shortName evidence="1">RNAP subunit alpha</shortName>
        <ecNumber evidence="1">2.7.7.6</ecNumber>
    </recommendedName>
    <alternativeName>
        <fullName evidence="1">RNA polymerase subunit alpha</fullName>
    </alternativeName>
    <alternativeName>
        <fullName evidence="1">Transcriptase subunit alpha</fullName>
    </alternativeName>
</protein>
<organism>
    <name type="scientific">Actinobacillus succinogenes (strain ATCC 55618 / DSM 22257 / CCUG 43843 / 130Z)</name>
    <dbReference type="NCBI Taxonomy" id="339671"/>
    <lineage>
        <taxon>Bacteria</taxon>
        <taxon>Pseudomonadati</taxon>
        <taxon>Pseudomonadota</taxon>
        <taxon>Gammaproteobacteria</taxon>
        <taxon>Pasteurellales</taxon>
        <taxon>Pasteurellaceae</taxon>
        <taxon>Actinobacillus</taxon>
    </lineage>
</organism>
<accession>A6VLL3</accession>
<name>RPOA_ACTSZ</name>
<dbReference type="EC" id="2.7.7.6" evidence="1"/>
<dbReference type="EMBL" id="CP000746">
    <property type="protein sequence ID" value="ABR73860.1"/>
    <property type="molecule type" value="Genomic_DNA"/>
</dbReference>
<dbReference type="RefSeq" id="WP_012072240.1">
    <property type="nucleotide sequence ID" value="NC_009655.1"/>
</dbReference>
<dbReference type="SMR" id="A6VLL3"/>
<dbReference type="STRING" id="339671.Asuc_0484"/>
<dbReference type="KEGG" id="asu:Asuc_0484"/>
<dbReference type="eggNOG" id="COG0202">
    <property type="taxonomic scope" value="Bacteria"/>
</dbReference>
<dbReference type="HOGENOM" id="CLU_053084_0_0_6"/>
<dbReference type="OrthoDB" id="9805706at2"/>
<dbReference type="Proteomes" id="UP000001114">
    <property type="component" value="Chromosome"/>
</dbReference>
<dbReference type="GO" id="GO:0005737">
    <property type="term" value="C:cytoplasm"/>
    <property type="evidence" value="ECO:0007669"/>
    <property type="project" value="UniProtKB-ARBA"/>
</dbReference>
<dbReference type="GO" id="GO:0000428">
    <property type="term" value="C:DNA-directed RNA polymerase complex"/>
    <property type="evidence" value="ECO:0007669"/>
    <property type="project" value="UniProtKB-KW"/>
</dbReference>
<dbReference type="GO" id="GO:0003677">
    <property type="term" value="F:DNA binding"/>
    <property type="evidence" value="ECO:0007669"/>
    <property type="project" value="UniProtKB-UniRule"/>
</dbReference>
<dbReference type="GO" id="GO:0003899">
    <property type="term" value="F:DNA-directed RNA polymerase activity"/>
    <property type="evidence" value="ECO:0007669"/>
    <property type="project" value="UniProtKB-UniRule"/>
</dbReference>
<dbReference type="GO" id="GO:0046983">
    <property type="term" value="F:protein dimerization activity"/>
    <property type="evidence" value="ECO:0007669"/>
    <property type="project" value="InterPro"/>
</dbReference>
<dbReference type="GO" id="GO:0006351">
    <property type="term" value="P:DNA-templated transcription"/>
    <property type="evidence" value="ECO:0007669"/>
    <property type="project" value="UniProtKB-UniRule"/>
</dbReference>
<dbReference type="CDD" id="cd06928">
    <property type="entry name" value="RNAP_alpha_NTD"/>
    <property type="match status" value="1"/>
</dbReference>
<dbReference type="FunFam" id="1.10.150.20:FF:000001">
    <property type="entry name" value="DNA-directed RNA polymerase subunit alpha"/>
    <property type="match status" value="1"/>
</dbReference>
<dbReference type="FunFam" id="2.170.120.12:FF:000001">
    <property type="entry name" value="DNA-directed RNA polymerase subunit alpha"/>
    <property type="match status" value="1"/>
</dbReference>
<dbReference type="Gene3D" id="1.10.150.20">
    <property type="entry name" value="5' to 3' exonuclease, C-terminal subdomain"/>
    <property type="match status" value="1"/>
</dbReference>
<dbReference type="Gene3D" id="2.170.120.12">
    <property type="entry name" value="DNA-directed RNA polymerase, insert domain"/>
    <property type="match status" value="1"/>
</dbReference>
<dbReference type="Gene3D" id="3.30.1360.10">
    <property type="entry name" value="RNA polymerase, RBP11-like subunit"/>
    <property type="match status" value="1"/>
</dbReference>
<dbReference type="HAMAP" id="MF_00059">
    <property type="entry name" value="RNApol_bact_RpoA"/>
    <property type="match status" value="1"/>
</dbReference>
<dbReference type="InterPro" id="IPR011262">
    <property type="entry name" value="DNA-dir_RNA_pol_insert"/>
</dbReference>
<dbReference type="InterPro" id="IPR011263">
    <property type="entry name" value="DNA-dir_RNA_pol_RpoA/D/Rpb3"/>
</dbReference>
<dbReference type="InterPro" id="IPR011773">
    <property type="entry name" value="DNA-dir_RpoA"/>
</dbReference>
<dbReference type="InterPro" id="IPR036603">
    <property type="entry name" value="RBP11-like"/>
</dbReference>
<dbReference type="InterPro" id="IPR011260">
    <property type="entry name" value="RNAP_asu_C"/>
</dbReference>
<dbReference type="InterPro" id="IPR036643">
    <property type="entry name" value="RNApol_insert_sf"/>
</dbReference>
<dbReference type="NCBIfam" id="NF003513">
    <property type="entry name" value="PRK05182.1-2"/>
    <property type="match status" value="1"/>
</dbReference>
<dbReference type="NCBIfam" id="NF003519">
    <property type="entry name" value="PRK05182.2-5"/>
    <property type="match status" value="1"/>
</dbReference>
<dbReference type="NCBIfam" id="TIGR02027">
    <property type="entry name" value="rpoA"/>
    <property type="match status" value="1"/>
</dbReference>
<dbReference type="Pfam" id="PF01000">
    <property type="entry name" value="RNA_pol_A_bac"/>
    <property type="match status" value="1"/>
</dbReference>
<dbReference type="Pfam" id="PF03118">
    <property type="entry name" value="RNA_pol_A_CTD"/>
    <property type="match status" value="1"/>
</dbReference>
<dbReference type="Pfam" id="PF01193">
    <property type="entry name" value="RNA_pol_L"/>
    <property type="match status" value="1"/>
</dbReference>
<dbReference type="SMART" id="SM00662">
    <property type="entry name" value="RPOLD"/>
    <property type="match status" value="1"/>
</dbReference>
<dbReference type="SUPFAM" id="SSF47789">
    <property type="entry name" value="C-terminal domain of RNA polymerase alpha subunit"/>
    <property type="match status" value="1"/>
</dbReference>
<dbReference type="SUPFAM" id="SSF56553">
    <property type="entry name" value="Insert subdomain of RNA polymerase alpha subunit"/>
    <property type="match status" value="1"/>
</dbReference>
<dbReference type="SUPFAM" id="SSF55257">
    <property type="entry name" value="RBP11-like subunits of RNA polymerase"/>
    <property type="match status" value="1"/>
</dbReference>
<feature type="chain" id="PRO_0000323613" description="DNA-directed RNA polymerase subunit alpha">
    <location>
        <begin position="1"/>
        <end position="329"/>
    </location>
</feature>
<feature type="region of interest" description="Alpha N-terminal domain (alpha-NTD)" evidence="1">
    <location>
        <begin position="1"/>
        <end position="235"/>
    </location>
</feature>
<feature type="region of interest" description="Alpha C-terminal domain (alpha-CTD)" evidence="1">
    <location>
        <begin position="249"/>
        <end position="329"/>
    </location>
</feature>
<comment type="function">
    <text evidence="1">DNA-dependent RNA polymerase catalyzes the transcription of DNA into RNA using the four ribonucleoside triphosphates as substrates.</text>
</comment>
<comment type="catalytic activity">
    <reaction evidence="1">
        <text>RNA(n) + a ribonucleoside 5'-triphosphate = RNA(n+1) + diphosphate</text>
        <dbReference type="Rhea" id="RHEA:21248"/>
        <dbReference type="Rhea" id="RHEA-COMP:14527"/>
        <dbReference type="Rhea" id="RHEA-COMP:17342"/>
        <dbReference type="ChEBI" id="CHEBI:33019"/>
        <dbReference type="ChEBI" id="CHEBI:61557"/>
        <dbReference type="ChEBI" id="CHEBI:140395"/>
        <dbReference type="EC" id="2.7.7.6"/>
    </reaction>
</comment>
<comment type="subunit">
    <text evidence="1">Homodimer. The RNAP catalytic core consists of 2 alpha, 1 beta, 1 beta' and 1 omega subunit. When a sigma factor is associated with the core the holoenzyme is formed, which can initiate transcription.</text>
</comment>
<comment type="domain">
    <text evidence="1">The N-terminal domain is essential for RNAP assembly and basal transcription, whereas the C-terminal domain is involved in interaction with transcriptional regulators and with upstream promoter elements.</text>
</comment>
<comment type="similarity">
    <text evidence="1">Belongs to the RNA polymerase alpha chain family.</text>
</comment>
<proteinExistence type="inferred from homology"/>
<evidence type="ECO:0000255" key="1">
    <source>
        <dbReference type="HAMAP-Rule" id="MF_00059"/>
    </source>
</evidence>
<sequence>MQGSVTEFLKPHLVDIEQISSTHAKVILEPLERGFGHTLGNALRRILLSSMPGCAVTEVEIEGVLHEYSSKEGVQEDILEVLLNLKGLAVKVQNKDDVFLTLNKSGIGPVVAGDITHDGDVEIVNPEHVICHLTDENASISMRIRVQRGRGYVPASARAHSQDEERPIGRLLVDACYSPVDRIAYNVEAARVEQRTDLDKLVIELETNGTLDPEEAIRRAATILAEQLDAFVDLRDVRQPEVKEEKPEFDPILLRPVDDLELTVRSANCLKAETIHYIGDLVQRTEVELLKTPNLGKKSLTEIKDVLASRGLSLGMRLDNWPPASIAED</sequence>